<gene>
    <name type="primary">TWF1</name>
</gene>
<comment type="function">
    <text evidence="1">Actin-binding protein involved in motile and morphological processes. Inhibits actin polymerization, likely by sequestering G-actin. By capping the barbed ends of filaments, it also regulates motility. Seems to play an important role in clathrin-mediated endocytosis and distribution of endocytic organelles (By similarity).</text>
</comment>
<comment type="subunit">
    <text evidence="2 4">Interacts with G-actin; ADP-actin form and capping protein (CP). May also be able to interact with TWF2 and phosphoinositides, PI(4,5)P2. When bound to PI(4,5)P2, it is down-regulated. Interacts with ACTG1.</text>
</comment>
<comment type="subcellular location">
    <subcellularLocation>
        <location>Cytoplasm</location>
    </subcellularLocation>
    <subcellularLocation>
        <location evidence="1">Cytoplasm</location>
        <location evidence="1">Cytoskeleton</location>
    </subcellularLocation>
    <text evidence="1">Diffuse cytoplasmic localization with perinuclear and G-actin-rich cortical actin structures sublocalization. Also found at membrane ruffles and cell-cell contacts (By similarity).</text>
</comment>
<comment type="PTM">
    <text evidence="1">Phosphorylated on serine and threonine residues.</text>
</comment>
<comment type="similarity">
    <text evidence="7">Belongs to the actin-binding proteins ADF family. Twinfilin subfamily.</text>
</comment>
<comment type="online information" name="Protein Spotlight">
    <link uri="https://www.proteinspotlight.org/back_issues/073"/>
    <text>Molecular embrace - Issue 73 of August 2006</text>
</comment>
<sequence length="350" mass="40195">MSHRTGIQASEDVKEIFARARNGKYRLLKISIENEQLVIGSYSQPSDSWDKDYDSFVLPLLEDKQPCYILFRLDSQNAQGYEWIFIAWSPDHSHVRQKMLYAATRATLKKEFGGGHIKDEVFGTVKEDVSLHGYKKYLLSQSSPAPLTAAEEELRQIKINEVQTDVGVDTKHQTLQGVAFPISREAFQALEKLNNRQLNYVQLEIDIKNEIIILANTTDTELKDLPKRIPKDSARYHFFLYKHSHEGDYLESIVFIYSMPGYTCSIRERMLYSSCKSPLLEIVERQLQMGVIRKIEIDNGDELTADFLYEEVHPKQHAHKQSFAKPKGPAGKRGIRRLIRGPAETEATTD</sequence>
<reference key="1">
    <citation type="submission" date="2004-11" db="EMBL/GenBank/DDBJ databases">
        <authorList>
            <consortium name="The German cDNA consortium"/>
        </authorList>
    </citation>
    <scope>NUCLEOTIDE SEQUENCE [LARGE SCALE MRNA]</scope>
    <source>
        <tissue>Kidney</tissue>
    </source>
</reference>
<feature type="initiator methionine" description="Removed" evidence="2">
    <location>
        <position position="1"/>
    </location>
</feature>
<feature type="chain" id="PRO_0000232405" description="Twinfilin-1">
    <location>
        <begin position="2"/>
        <end position="350"/>
    </location>
</feature>
<feature type="domain" description="ADF-H 1" evidence="5">
    <location>
        <begin position="2"/>
        <end position="139"/>
    </location>
</feature>
<feature type="domain" description="ADF-H 2" evidence="5">
    <location>
        <begin position="175"/>
        <end position="313"/>
    </location>
</feature>
<feature type="region of interest" description="Disordered" evidence="6">
    <location>
        <begin position="316"/>
        <end position="350"/>
    </location>
</feature>
<feature type="modified residue" description="N-acetylserine" evidence="2">
    <location>
        <position position="2"/>
    </location>
</feature>
<feature type="modified residue" description="Phosphoserine" evidence="2">
    <location>
        <position position="143"/>
    </location>
</feature>
<feature type="modified residue" description="Phosphoserine" evidence="3">
    <location>
        <position position="277"/>
    </location>
</feature>
<feature type="modified residue" description="Phosphotyrosine" evidence="2">
    <location>
        <position position="309"/>
    </location>
</feature>
<feature type="modified residue" description="Phosphothreonine" evidence="2">
    <location>
        <position position="349"/>
    </location>
</feature>
<organism>
    <name type="scientific">Pongo abelii</name>
    <name type="common">Sumatran orangutan</name>
    <name type="synonym">Pongo pygmaeus abelii</name>
    <dbReference type="NCBI Taxonomy" id="9601"/>
    <lineage>
        <taxon>Eukaryota</taxon>
        <taxon>Metazoa</taxon>
        <taxon>Chordata</taxon>
        <taxon>Craniata</taxon>
        <taxon>Vertebrata</taxon>
        <taxon>Euteleostomi</taxon>
        <taxon>Mammalia</taxon>
        <taxon>Eutheria</taxon>
        <taxon>Euarchontoglires</taxon>
        <taxon>Primates</taxon>
        <taxon>Haplorrhini</taxon>
        <taxon>Catarrhini</taxon>
        <taxon>Hominidae</taxon>
        <taxon>Pongo</taxon>
    </lineage>
</organism>
<accession>Q5R7N2</accession>
<proteinExistence type="evidence at transcript level"/>
<name>TWF1_PONAB</name>
<dbReference type="EMBL" id="CR860082">
    <property type="protein sequence ID" value="CAH92228.1"/>
    <property type="molecule type" value="mRNA"/>
</dbReference>
<dbReference type="RefSeq" id="NP_001126303.1">
    <property type="nucleotide sequence ID" value="NM_001132831.1"/>
</dbReference>
<dbReference type="SMR" id="Q5R7N2"/>
<dbReference type="STRING" id="9601.ENSPPYP00000005055"/>
<dbReference type="GeneID" id="100173282"/>
<dbReference type="KEGG" id="pon:100173282"/>
<dbReference type="CTD" id="5756"/>
<dbReference type="eggNOG" id="KOG1747">
    <property type="taxonomic scope" value="Eukaryota"/>
</dbReference>
<dbReference type="InParanoid" id="Q5R7N2"/>
<dbReference type="OrthoDB" id="10006997at2759"/>
<dbReference type="Proteomes" id="UP000001595">
    <property type="component" value="Unplaced"/>
</dbReference>
<dbReference type="GO" id="GO:0005884">
    <property type="term" value="C:actin filament"/>
    <property type="evidence" value="ECO:0007669"/>
    <property type="project" value="TreeGrafter"/>
</dbReference>
<dbReference type="GO" id="GO:0030016">
    <property type="term" value="C:myofibril"/>
    <property type="evidence" value="ECO:0007669"/>
    <property type="project" value="TreeGrafter"/>
</dbReference>
<dbReference type="GO" id="GO:0003779">
    <property type="term" value="F:actin binding"/>
    <property type="evidence" value="ECO:0000250"/>
    <property type="project" value="UniProtKB"/>
</dbReference>
<dbReference type="GO" id="GO:0051015">
    <property type="term" value="F:actin filament binding"/>
    <property type="evidence" value="ECO:0007669"/>
    <property type="project" value="TreeGrafter"/>
</dbReference>
<dbReference type="GO" id="GO:0003785">
    <property type="term" value="F:actin monomer binding"/>
    <property type="evidence" value="ECO:0007669"/>
    <property type="project" value="TreeGrafter"/>
</dbReference>
<dbReference type="GO" id="GO:0030042">
    <property type="term" value="P:actin filament depolymerization"/>
    <property type="evidence" value="ECO:0007669"/>
    <property type="project" value="TreeGrafter"/>
</dbReference>
<dbReference type="GO" id="GO:0051016">
    <property type="term" value="P:barbed-end actin filament capping"/>
    <property type="evidence" value="ECO:0007669"/>
    <property type="project" value="TreeGrafter"/>
</dbReference>
<dbReference type="GO" id="GO:0010976">
    <property type="term" value="P:positive regulation of neuron projection development"/>
    <property type="evidence" value="ECO:0007669"/>
    <property type="project" value="TreeGrafter"/>
</dbReference>
<dbReference type="GO" id="GO:0010591">
    <property type="term" value="P:regulation of lamellipodium assembly"/>
    <property type="evidence" value="ECO:0007669"/>
    <property type="project" value="TreeGrafter"/>
</dbReference>
<dbReference type="CDD" id="cd11284">
    <property type="entry name" value="ADF_Twf-C_like"/>
    <property type="match status" value="1"/>
</dbReference>
<dbReference type="CDD" id="cd11285">
    <property type="entry name" value="ADF_Twf-N_like"/>
    <property type="match status" value="1"/>
</dbReference>
<dbReference type="FunFam" id="3.40.20.10:FF:000007">
    <property type="entry name" value="Twinfilin-1 isoform 1"/>
    <property type="match status" value="1"/>
</dbReference>
<dbReference type="FunFam" id="3.40.20.10:FF:000012">
    <property type="entry name" value="Twinfilin-1 isoform 1"/>
    <property type="match status" value="1"/>
</dbReference>
<dbReference type="Gene3D" id="3.40.20.10">
    <property type="entry name" value="Severin"/>
    <property type="match status" value="2"/>
</dbReference>
<dbReference type="InterPro" id="IPR002108">
    <property type="entry name" value="ADF-H"/>
</dbReference>
<dbReference type="InterPro" id="IPR029006">
    <property type="entry name" value="ADF-H/Gelsolin-like_dom_sf"/>
</dbReference>
<dbReference type="InterPro" id="IPR028458">
    <property type="entry name" value="Twinfilin"/>
</dbReference>
<dbReference type="PANTHER" id="PTHR13759">
    <property type="entry name" value="TWINFILIN"/>
    <property type="match status" value="1"/>
</dbReference>
<dbReference type="PANTHER" id="PTHR13759:SF8">
    <property type="entry name" value="TWINFILIN-1"/>
    <property type="match status" value="1"/>
</dbReference>
<dbReference type="Pfam" id="PF00241">
    <property type="entry name" value="Cofilin_ADF"/>
    <property type="match status" value="2"/>
</dbReference>
<dbReference type="SMART" id="SM00102">
    <property type="entry name" value="ADF"/>
    <property type="match status" value="2"/>
</dbReference>
<dbReference type="SUPFAM" id="SSF55753">
    <property type="entry name" value="Actin depolymerizing proteins"/>
    <property type="match status" value="2"/>
</dbReference>
<dbReference type="PROSITE" id="PS51263">
    <property type="entry name" value="ADF_H"/>
    <property type="match status" value="2"/>
</dbReference>
<evidence type="ECO:0000250" key="1"/>
<evidence type="ECO:0000250" key="2">
    <source>
        <dbReference type="UniProtKB" id="Q12792"/>
    </source>
</evidence>
<evidence type="ECO:0000250" key="3">
    <source>
        <dbReference type="UniProtKB" id="Q5RJR2"/>
    </source>
</evidence>
<evidence type="ECO:0000250" key="4">
    <source>
        <dbReference type="UniProtKB" id="Q91YR1"/>
    </source>
</evidence>
<evidence type="ECO:0000255" key="5">
    <source>
        <dbReference type="PROSITE-ProRule" id="PRU00599"/>
    </source>
</evidence>
<evidence type="ECO:0000256" key="6">
    <source>
        <dbReference type="SAM" id="MobiDB-lite"/>
    </source>
</evidence>
<evidence type="ECO:0000305" key="7"/>
<keyword id="KW-0007">Acetylation</keyword>
<keyword id="KW-0009">Actin-binding</keyword>
<keyword id="KW-0963">Cytoplasm</keyword>
<keyword id="KW-0206">Cytoskeleton</keyword>
<keyword id="KW-0597">Phosphoprotein</keyword>
<keyword id="KW-1185">Reference proteome</keyword>
<keyword id="KW-0677">Repeat</keyword>
<protein>
    <recommendedName>
        <fullName>Twinfilin-1</fullName>
    </recommendedName>
</protein>